<evidence type="ECO:0000250" key="1"/>
<evidence type="ECO:0000250" key="2">
    <source>
        <dbReference type="UniProtKB" id="P47752"/>
    </source>
</evidence>
<evidence type="ECO:0000255" key="3"/>
<evidence type="ECO:0000255" key="4">
    <source>
        <dbReference type="PROSITE-ProRule" id="PRU00521"/>
    </source>
</evidence>
<evidence type="ECO:0000269" key="5">
    <source>
    </source>
</evidence>
<sequence length="370" mass="41777">MTTCRLFAGFCQAVTMSKYSQYFNKTLIQVHYLTAKEMTAEELRDRIESKQSLSSLNILFVVICSIIILENLLVLIAVFRNKKFHSAMFFFIGNLAFSDLLAGSAYIANIFLSGPRTFHLTPVQWFIREGTAFIALSASVFSLLAIAIERYIAITKVKVYGSNKTCRMFLLIGACWVMSILLGGLPIIGWNCINNLDDCSAVLPLNTRYYIRFVVTIFSIILLSIVILYVRIYLIVRTSHQEATNSPAYALLKTVTIVLGVFIICWLPAFTILLLDTSCKMKQCPILNNAGIFFSFATLNSALNPLIYTLRSKDMRKEFLRVLCCWGLLNCGRPPHRCMVPLKSSSSMEHCTNKHEHQSIPIMQDCTTCV</sequence>
<dbReference type="EMBL" id="AF260256">
    <property type="protein sequence ID" value="AAF88001.1"/>
    <property type="molecule type" value="mRNA"/>
</dbReference>
<dbReference type="RefSeq" id="NP_001153442.1">
    <property type="nucleotide sequence ID" value="NM_001159970.1"/>
</dbReference>
<dbReference type="SMR" id="Q9I8K8"/>
<dbReference type="FunCoup" id="Q9I8K8">
    <property type="interactions" value="372"/>
</dbReference>
<dbReference type="STRING" id="7955.ENSDARP00000053105"/>
<dbReference type="GlyCosmos" id="Q9I8K8">
    <property type="glycosylation" value="1 site, No reported glycans"/>
</dbReference>
<dbReference type="PaxDb" id="7955-ENSDARP00000053105"/>
<dbReference type="Ensembl" id="ENSDART00000053106">
    <property type="protein sequence ID" value="ENSDARP00000053105"/>
    <property type="gene ID" value="ENSDARG00000036548"/>
</dbReference>
<dbReference type="GeneID" id="170457"/>
<dbReference type="KEGG" id="dre:170457"/>
<dbReference type="AGR" id="ZFIN:ZDB-GENE-020123-2"/>
<dbReference type="CTD" id="9294"/>
<dbReference type="ZFIN" id="ZDB-GENE-020123-2">
    <property type="gene designation" value="s1pr2"/>
</dbReference>
<dbReference type="eggNOG" id="ENOG502QVQY">
    <property type="taxonomic scope" value="Eukaryota"/>
</dbReference>
<dbReference type="HOGENOM" id="CLU_047979_1_0_1"/>
<dbReference type="InParanoid" id="Q9I8K8"/>
<dbReference type="OMA" id="ACWVTSI"/>
<dbReference type="OrthoDB" id="10051098at2759"/>
<dbReference type="PhylomeDB" id="Q9I8K8"/>
<dbReference type="TreeFam" id="TF330052"/>
<dbReference type="Reactome" id="R-DRE-418594">
    <property type="pathway name" value="G alpha (i) signalling events"/>
</dbReference>
<dbReference type="Reactome" id="R-DRE-419408">
    <property type="pathway name" value="Lysosphingolipid and LPA receptors"/>
</dbReference>
<dbReference type="PRO" id="PR:Q9I8K8"/>
<dbReference type="Proteomes" id="UP000000437">
    <property type="component" value="Chromosome 3"/>
</dbReference>
<dbReference type="Bgee" id="ENSDARG00000036548">
    <property type="expression patterns" value="Expressed in zone of skin and 42 other cell types or tissues"/>
</dbReference>
<dbReference type="GO" id="GO:0005737">
    <property type="term" value="C:cytoplasm"/>
    <property type="evidence" value="ECO:0000318"/>
    <property type="project" value="GO_Central"/>
</dbReference>
<dbReference type="GO" id="GO:0005886">
    <property type="term" value="C:plasma membrane"/>
    <property type="evidence" value="ECO:0000318"/>
    <property type="project" value="GO_Central"/>
</dbReference>
<dbReference type="GO" id="GO:0038036">
    <property type="term" value="F:sphingosine-1-phosphate receptor activity"/>
    <property type="evidence" value="ECO:0000318"/>
    <property type="project" value="GO_Central"/>
</dbReference>
<dbReference type="GO" id="GO:0007189">
    <property type="term" value="P:adenylate cyclase-activating G protein-coupled receptor signaling pathway"/>
    <property type="evidence" value="ECO:0000318"/>
    <property type="project" value="GO_Central"/>
</dbReference>
<dbReference type="GO" id="GO:0048901">
    <property type="term" value="P:anterior lateral line neuromast development"/>
    <property type="evidence" value="ECO:0000315"/>
    <property type="project" value="ZFIN"/>
</dbReference>
<dbReference type="GO" id="GO:0035676">
    <property type="term" value="P:anterior lateral line neuromast hair cell development"/>
    <property type="evidence" value="ECO:0000315"/>
    <property type="project" value="ZFIN"/>
</dbReference>
<dbReference type="GO" id="GO:0003319">
    <property type="term" value="P:cardioblast migration to the midline involved in heart rudiment formation"/>
    <property type="evidence" value="ECO:0000315"/>
    <property type="project" value="ZFIN"/>
</dbReference>
<dbReference type="GO" id="GO:0042074">
    <property type="term" value="P:cell migration involved in gastrulation"/>
    <property type="evidence" value="ECO:0000315"/>
    <property type="project" value="ZFIN"/>
</dbReference>
<dbReference type="GO" id="GO:0060973">
    <property type="term" value="P:cell migration involved in heart development"/>
    <property type="evidence" value="ECO:0000315"/>
    <property type="project" value="ZFIN"/>
</dbReference>
<dbReference type="GO" id="GO:0003318">
    <property type="term" value="P:cell migration to the midline involved in heart development"/>
    <property type="evidence" value="ECO:0000315"/>
    <property type="project" value="ZFIN"/>
</dbReference>
<dbReference type="GO" id="GO:0060026">
    <property type="term" value="P:convergent extension"/>
    <property type="evidence" value="ECO:0000315"/>
    <property type="project" value="ZFIN"/>
</dbReference>
<dbReference type="GO" id="GO:0060027">
    <property type="term" value="P:convergent extension involved in gastrulation"/>
    <property type="evidence" value="ECO:0000314"/>
    <property type="project" value="ZFIN"/>
</dbReference>
<dbReference type="GO" id="GO:0035050">
    <property type="term" value="P:embryonic heart tube development"/>
    <property type="evidence" value="ECO:0000315"/>
    <property type="project" value="ZFIN"/>
</dbReference>
<dbReference type="GO" id="GO:0003143">
    <property type="term" value="P:embryonic heart tube morphogenesis"/>
    <property type="evidence" value="ECO:0000315"/>
    <property type="project" value="ZFIN"/>
</dbReference>
<dbReference type="GO" id="GO:0048703">
    <property type="term" value="P:embryonic viscerocranium morphogenesis"/>
    <property type="evidence" value="ECO:0000316"/>
    <property type="project" value="ZFIN"/>
</dbReference>
<dbReference type="GO" id="GO:0007492">
    <property type="term" value="P:endoderm development"/>
    <property type="evidence" value="ECO:0000315"/>
    <property type="project" value="ZFIN"/>
</dbReference>
<dbReference type="GO" id="GO:0007507">
    <property type="term" value="P:heart development"/>
    <property type="evidence" value="ECO:0000315"/>
    <property type="project" value="ZFIN"/>
</dbReference>
<dbReference type="GO" id="GO:0003007">
    <property type="term" value="P:heart morphogenesis"/>
    <property type="evidence" value="ECO:0000315"/>
    <property type="project" value="ZFIN"/>
</dbReference>
<dbReference type="GO" id="GO:0003315">
    <property type="term" value="P:heart rudiment formation"/>
    <property type="evidence" value="ECO:0000315"/>
    <property type="project" value="ZFIN"/>
</dbReference>
<dbReference type="GO" id="GO:0008078">
    <property type="term" value="P:mesodermal cell migration"/>
    <property type="evidence" value="ECO:0000316"/>
    <property type="project" value="ZFIN"/>
</dbReference>
<dbReference type="GO" id="GO:0030336">
    <property type="term" value="P:negative regulation of cell migration"/>
    <property type="evidence" value="ECO:0000315"/>
    <property type="project" value="ZFIN"/>
</dbReference>
<dbReference type="GO" id="GO:0048840">
    <property type="term" value="P:otolith development"/>
    <property type="evidence" value="ECO:0000315"/>
    <property type="project" value="ZFIN"/>
</dbReference>
<dbReference type="GO" id="GO:0035677">
    <property type="term" value="P:posterior lateral line neuromast hair cell development"/>
    <property type="evidence" value="ECO:0000315"/>
    <property type="project" value="ZFIN"/>
</dbReference>
<dbReference type="GO" id="GO:0061035">
    <property type="term" value="P:regulation of cartilage development"/>
    <property type="evidence" value="ECO:0000315"/>
    <property type="project" value="ZFIN"/>
</dbReference>
<dbReference type="GO" id="GO:0019222">
    <property type="term" value="P:regulation of metabolic process"/>
    <property type="evidence" value="ECO:0000318"/>
    <property type="project" value="GO_Central"/>
</dbReference>
<dbReference type="GO" id="GO:0060872">
    <property type="term" value="P:semicircular canal development"/>
    <property type="evidence" value="ECO:0000315"/>
    <property type="project" value="ZFIN"/>
</dbReference>
<dbReference type="GO" id="GO:0003376">
    <property type="term" value="P:sphingosine-1-phosphate receptor signaling pathway"/>
    <property type="evidence" value="ECO:0000315"/>
    <property type="project" value="ZFIN"/>
</dbReference>
<dbReference type="GO" id="GO:0001944">
    <property type="term" value="P:vasculature development"/>
    <property type="evidence" value="ECO:0000316"/>
    <property type="project" value="ZFIN"/>
</dbReference>
<dbReference type="CDD" id="cd15347">
    <property type="entry name" value="7tmA_S1PR2_Edg5"/>
    <property type="match status" value="1"/>
</dbReference>
<dbReference type="FunFam" id="1.20.1070.10:FF:000098">
    <property type="entry name" value="Sphingosine 1-phosphate receptor 1"/>
    <property type="match status" value="1"/>
</dbReference>
<dbReference type="Gene3D" id="1.20.1070.10">
    <property type="entry name" value="Rhodopsin 7-helix transmembrane proteins"/>
    <property type="match status" value="1"/>
</dbReference>
<dbReference type="InterPro" id="IPR000276">
    <property type="entry name" value="GPCR_Rhodpsn"/>
</dbReference>
<dbReference type="InterPro" id="IPR017452">
    <property type="entry name" value="GPCR_Rhodpsn_7TM"/>
</dbReference>
<dbReference type="InterPro" id="IPR004061">
    <property type="entry name" value="S1P_rcpt"/>
</dbReference>
<dbReference type="PANTHER" id="PTHR22750">
    <property type="entry name" value="G-PROTEIN COUPLED RECEPTOR"/>
    <property type="match status" value="1"/>
</dbReference>
<dbReference type="Pfam" id="PF00001">
    <property type="entry name" value="7tm_1"/>
    <property type="match status" value="1"/>
</dbReference>
<dbReference type="PRINTS" id="PR00642">
    <property type="entry name" value="EDG1RECEPTOR"/>
</dbReference>
<dbReference type="PRINTS" id="PR00237">
    <property type="entry name" value="GPCRRHODOPSN"/>
</dbReference>
<dbReference type="PRINTS" id="PR01523">
    <property type="entry name" value="S1PRECEPTOR"/>
</dbReference>
<dbReference type="SMART" id="SM01381">
    <property type="entry name" value="7TM_GPCR_Srsx"/>
    <property type="match status" value="1"/>
</dbReference>
<dbReference type="SUPFAM" id="SSF81321">
    <property type="entry name" value="Family A G protein-coupled receptor-like"/>
    <property type="match status" value="1"/>
</dbReference>
<dbReference type="PROSITE" id="PS00237">
    <property type="entry name" value="G_PROTEIN_RECEP_F1_1"/>
    <property type="match status" value="1"/>
</dbReference>
<dbReference type="PROSITE" id="PS50262">
    <property type="entry name" value="G_PROTEIN_RECEP_F1_2"/>
    <property type="match status" value="1"/>
</dbReference>
<accession>Q9I8K8</accession>
<name>S1PR2_DANRE</name>
<reference key="1">
    <citation type="journal article" date="2000" name="Nature">
        <title>A sphingosine-1-phosphate receptor regulates cell migration during vertebrate heart development.</title>
        <authorList>
            <person name="Kupperman E."/>
            <person name="An S."/>
            <person name="Osborne N."/>
            <person name="Waldron S."/>
            <person name="Stainier D.Y.R."/>
        </authorList>
    </citation>
    <scope>NUCLEOTIDE SEQUENCE [MRNA]</scope>
    <scope>FUNCTION</scope>
    <scope>VARIANTS MIL HIS-150 AND CYS-167</scope>
</reference>
<organism>
    <name type="scientific">Danio rerio</name>
    <name type="common">Zebrafish</name>
    <name type="synonym">Brachydanio rerio</name>
    <dbReference type="NCBI Taxonomy" id="7955"/>
    <lineage>
        <taxon>Eukaryota</taxon>
        <taxon>Metazoa</taxon>
        <taxon>Chordata</taxon>
        <taxon>Craniata</taxon>
        <taxon>Vertebrata</taxon>
        <taxon>Euteleostomi</taxon>
        <taxon>Actinopterygii</taxon>
        <taxon>Neopterygii</taxon>
        <taxon>Teleostei</taxon>
        <taxon>Ostariophysi</taxon>
        <taxon>Cypriniformes</taxon>
        <taxon>Danionidae</taxon>
        <taxon>Danioninae</taxon>
        <taxon>Danio</taxon>
    </lineage>
</organism>
<protein>
    <recommendedName>
        <fullName>Sphingosine 1-phosphate receptor 2</fullName>
        <shortName>S1P receptor 2</shortName>
        <shortName>S1P2</shortName>
    </recommendedName>
    <alternativeName>
        <fullName>Sphingosine 1-phosphate receptor Edg-5</fullName>
        <shortName>S1P receptor Edg-5</shortName>
    </alternativeName>
</protein>
<proteinExistence type="evidence at protein level"/>
<keyword id="KW-1003">Cell membrane</keyword>
<keyword id="KW-0225">Disease variant</keyword>
<keyword id="KW-0297">G-protein coupled receptor</keyword>
<keyword id="KW-0325">Glycoprotein</keyword>
<keyword id="KW-0449">Lipoprotein</keyword>
<keyword id="KW-0472">Membrane</keyword>
<keyword id="KW-0564">Palmitate</keyword>
<keyword id="KW-0675">Receptor</keyword>
<keyword id="KW-1185">Reference proteome</keyword>
<keyword id="KW-0807">Transducer</keyword>
<keyword id="KW-0812">Transmembrane</keyword>
<keyword id="KW-1133">Transmembrane helix</keyword>
<gene>
    <name type="primary">s1pr2</name>
    <name type="synonym">edg5</name>
</gene>
<feature type="chain" id="PRO_0000069430" description="Sphingosine 1-phosphate receptor 2">
    <location>
        <begin position="1"/>
        <end position="370"/>
    </location>
</feature>
<feature type="topological domain" description="Extracellular" evidence="1">
    <location>
        <begin position="1"/>
        <end position="57"/>
    </location>
</feature>
<feature type="transmembrane region" description="Helical; Name=1" evidence="1">
    <location>
        <begin position="58"/>
        <end position="78"/>
    </location>
</feature>
<feature type="topological domain" description="Cytoplasmic" evidence="1">
    <location>
        <begin position="79"/>
        <end position="87"/>
    </location>
</feature>
<feature type="transmembrane region" description="Helical; Name=2" evidence="1">
    <location>
        <begin position="88"/>
        <end position="108"/>
    </location>
</feature>
<feature type="topological domain" description="Extracellular" evidence="1">
    <location>
        <begin position="109"/>
        <end position="128"/>
    </location>
</feature>
<feature type="transmembrane region" description="Helical; Name=3" evidence="1">
    <location>
        <begin position="129"/>
        <end position="149"/>
    </location>
</feature>
<feature type="topological domain" description="Cytoplasmic" evidence="1">
    <location>
        <begin position="150"/>
        <end position="167"/>
    </location>
</feature>
<feature type="transmembrane region" description="Helical; Name=4" evidence="1">
    <location>
        <begin position="168"/>
        <end position="193"/>
    </location>
</feature>
<feature type="topological domain" description="Extracellular" evidence="1">
    <location>
        <begin position="194"/>
        <end position="219"/>
    </location>
</feature>
<feature type="transmembrane region" description="Helical; Name=5" evidence="1">
    <location>
        <begin position="220"/>
        <end position="230"/>
    </location>
</feature>
<feature type="topological domain" description="Cytoplasmic" evidence="1">
    <location>
        <begin position="231"/>
        <end position="254"/>
    </location>
</feature>
<feature type="transmembrane region" description="Helical; Name=6" evidence="1">
    <location>
        <begin position="255"/>
        <end position="275"/>
    </location>
</feature>
<feature type="topological domain" description="Extracellular" evidence="1">
    <location>
        <begin position="276"/>
        <end position="289"/>
    </location>
</feature>
<feature type="transmembrane region" description="Helical; Name=7" evidence="1">
    <location>
        <begin position="290"/>
        <end position="310"/>
    </location>
</feature>
<feature type="topological domain" description="Cytoplasmic" evidence="1">
    <location>
        <begin position="311"/>
        <end position="370"/>
    </location>
</feature>
<feature type="lipid moiety-binding region" description="S-palmitoyl cysteine" evidence="1">
    <location>
        <position position="325"/>
    </location>
</feature>
<feature type="glycosylation site" description="N-linked (GlcNAc...) asparagine" evidence="3">
    <location>
        <position position="24"/>
    </location>
</feature>
<feature type="sequence variant" description="In mil; allele m93; lack of S1P-mediated signaling." evidence="5">
    <original>R</original>
    <variation>H</variation>
    <location>
        <position position="150"/>
    </location>
</feature>
<feature type="sequence variant" description="In mil; allele te273; lack of S1P-mediated signaling." evidence="5">
    <original>R</original>
    <variation>C</variation>
    <location>
        <position position="167"/>
    </location>
</feature>
<comment type="function">
    <text evidence="2 5">Receptor for the lysosphingolipid sphingosine 1-phosphate (S1P) (PubMed:10910360). S1P receptor is critical for cell migration and epithelial integrity during vertebrate embryogenesis (PubMed:10910360). Receptor for the chemokine-like protein FAM19A5 (By similarity). Mediates the inhibitory effect of FAM19A5 on vascular smooth muscle cell proliferation and migration (By similarity).</text>
</comment>
<comment type="subcellular location">
    <subcellularLocation>
        <location>Cell membrane</location>
        <topology>Multi-pass membrane protein</topology>
    </subcellularLocation>
</comment>
<comment type="developmental stage">
    <text>The expression pattern is complex and dynamic. Maternal expression is found in a diffuse pattern throughout the blastoderm, and this pattern persists through the onset of gastrulation. More pronounced expression can be seen at tailbud stage in the anterior portion of the embryo and along the embryonic axis, and at the 16-somite stage in the midbrain/hindbrain boundary and the tip of the tail where blisters later develop in receptor mutants. At the 18-somite stage, expression appears just lateral to the midline, and as the myocardial precursors migrate to the midline, their location overlaps with this domain of receptor expression.</text>
</comment>
<comment type="disease">
    <text evidence="5">Defects in s1pr2 are a cause of heart development abnormality named miles apart (mil). In all vertebrates, the myocardial progenitors involute early during gastrulation and come to occupy bilateral positions in the anterior lateral plate mesoderm (LPM). During somitogenesis, these cells undergo a second phase of migration toward the midline and fuse to form the definitive heart tube. Defects in S1PR2 disrupt this process, leading to the formation of two laterally positioned hearts (cardia bifida). The mil phenotype for which two recessive alleles exist, mil(m93) and mil(te273) are fully penetrant. Mil(m93)/mil(te273) transheterozygous embryos display the same phenotype as homozygotes for either single mutant allele. In addition to cardia bifida, mil mutants display epithelial tail blisters, indicative of a defect in epithelial integrity.</text>
</comment>
<comment type="similarity">
    <text evidence="4">Belongs to the G-protein coupled receptor 1 family.</text>
</comment>